<protein>
    <recommendedName>
        <fullName evidence="1">Replication restart protein PriB</fullName>
    </recommendedName>
</protein>
<proteinExistence type="inferred from homology"/>
<gene>
    <name evidence="1" type="primary">priB</name>
    <name type="ordered locus">SG4234</name>
</gene>
<name>PRIB_SALG2</name>
<organism>
    <name type="scientific">Salmonella gallinarum (strain 287/91 / NCTC 13346)</name>
    <dbReference type="NCBI Taxonomy" id="550538"/>
    <lineage>
        <taxon>Bacteria</taxon>
        <taxon>Pseudomonadati</taxon>
        <taxon>Pseudomonadota</taxon>
        <taxon>Gammaproteobacteria</taxon>
        <taxon>Enterobacterales</taxon>
        <taxon>Enterobacteriaceae</taxon>
        <taxon>Salmonella</taxon>
    </lineage>
</organism>
<comment type="function">
    <text evidence="1">Involved in the restart of stalled replication forks, which reloads the replicative helicase on sites other than the origin of replication; the PriA-PriB pathway is the major replication restart pathway. During primosome assembly it facilitates complex formation between PriA and DnaT on DNA; stabilizes PriA on DNA. Stimulates the DNA unwinding activity of PriA helicase.</text>
</comment>
<comment type="subunit">
    <text evidence="1">Homodimer. Interacts with PriA and DnaT. Component of the replication restart primosome. Primosome assembly occurs via a 'hand-off' mechanism. PriA binds to replication forks, subsequently PriB then DnaT bind; DnaT then displaces ssDNA to generate the helicase loading substrate.</text>
</comment>
<comment type="similarity">
    <text evidence="1">Belongs to the PriB family.</text>
</comment>
<reference key="1">
    <citation type="journal article" date="2008" name="Genome Res.">
        <title>Comparative genome analysis of Salmonella enteritidis PT4 and Salmonella gallinarum 287/91 provides insights into evolutionary and host adaptation pathways.</title>
        <authorList>
            <person name="Thomson N.R."/>
            <person name="Clayton D.J."/>
            <person name="Windhorst D."/>
            <person name="Vernikos G."/>
            <person name="Davidson S."/>
            <person name="Churcher C."/>
            <person name="Quail M.A."/>
            <person name="Stevens M."/>
            <person name="Jones M.A."/>
            <person name="Watson M."/>
            <person name="Barron A."/>
            <person name="Layton A."/>
            <person name="Pickard D."/>
            <person name="Kingsley R.A."/>
            <person name="Bignell A."/>
            <person name="Clark L."/>
            <person name="Harris B."/>
            <person name="Ormond D."/>
            <person name="Abdellah Z."/>
            <person name="Brooks K."/>
            <person name="Cherevach I."/>
            <person name="Chillingworth T."/>
            <person name="Woodward J."/>
            <person name="Norberczak H."/>
            <person name="Lord A."/>
            <person name="Arrowsmith C."/>
            <person name="Jagels K."/>
            <person name="Moule S."/>
            <person name="Mungall K."/>
            <person name="Saunders M."/>
            <person name="Whitehead S."/>
            <person name="Chabalgoity J.A."/>
            <person name="Maskell D."/>
            <person name="Humphreys T."/>
            <person name="Roberts M."/>
            <person name="Barrow P.A."/>
            <person name="Dougan G."/>
            <person name="Parkhill J."/>
        </authorList>
    </citation>
    <scope>NUCLEOTIDE SEQUENCE [LARGE SCALE GENOMIC DNA]</scope>
    <source>
        <strain>287/91 / NCTC 13346</strain>
    </source>
</reference>
<sequence>MTNRLALSGTVCRAPLRKVSPSGIPHCQFVLEHRSVQEEAGFHRQAWCQMPVIVSGHENQAITHSITVGSRITVQGFISCHKAKNGLSKMVLHAEQIELIDSGD</sequence>
<feature type="chain" id="PRO_1000132629" description="Replication restart protein PriB">
    <location>
        <begin position="1"/>
        <end position="104"/>
    </location>
</feature>
<feature type="domain" description="SSB" evidence="1">
    <location>
        <begin position="1"/>
        <end position="101"/>
    </location>
</feature>
<dbReference type="EMBL" id="AM933173">
    <property type="protein sequence ID" value="CAR39997.1"/>
    <property type="molecule type" value="Genomic_DNA"/>
</dbReference>
<dbReference type="RefSeq" id="WP_001519453.1">
    <property type="nucleotide sequence ID" value="NC_011274.1"/>
</dbReference>
<dbReference type="SMR" id="B5R9E9"/>
<dbReference type="GeneID" id="66758616"/>
<dbReference type="KEGG" id="seg:SG4234"/>
<dbReference type="HOGENOM" id="CLU_166075_0_0_6"/>
<dbReference type="Proteomes" id="UP000008321">
    <property type="component" value="Chromosome"/>
</dbReference>
<dbReference type="GO" id="GO:1990077">
    <property type="term" value="C:primosome complex"/>
    <property type="evidence" value="ECO:0007669"/>
    <property type="project" value="UniProtKB-KW"/>
</dbReference>
<dbReference type="GO" id="GO:0003697">
    <property type="term" value="F:single-stranded DNA binding"/>
    <property type="evidence" value="ECO:0007669"/>
    <property type="project" value="UniProtKB-UniRule"/>
</dbReference>
<dbReference type="GO" id="GO:0006269">
    <property type="term" value="P:DNA replication, synthesis of primer"/>
    <property type="evidence" value="ECO:0007669"/>
    <property type="project" value="UniProtKB-KW"/>
</dbReference>
<dbReference type="CDD" id="cd04496">
    <property type="entry name" value="SSB_OBF"/>
    <property type="match status" value="1"/>
</dbReference>
<dbReference type="FunFam" id="2.40.50.140:FF:000077">
    <property type="entry name" value="Primosomal replication protein N"/>
    <property type="match status" value="1"/>
</dbReference>
<dbReference type="Gene3D" id="2.40.50.140">
    <property type="entry name" value="Nucleic acid-binding proteins"/>
    <property type="match status" value="1"/>
</dbReference>
<dbReference type="HAMAP" id="MF_00720">
    <property type="entry name" value="PriB"/>
    <property type="match status" value="1"/>
</dbReference>
<dbReference type="InterPro" id="IPR012340">
    <property type="entry name" value="NA-bd_OB-fold"/>
</dbReference>
<dbReference type="InterPro" id="IPR000424">
    <property type="entry name" value="Primosome_PriB/ssb"/>
</dbReference>
<dbReference type="InterPro" id="IPR023646">
    <property type="entry name" value="Prisomal_replication_PriB"/>
</dbReference>
<dbReference type="NCBIfam" id="TIGR04418">
    <property type="entry name" value="PriB_gamma"/>
    <property type="match status" value="1"/>
</dbReference>
<dbReference type="Pfam" id="PF22657">
    <property type="entry name" value="SSB_1"/>
    <property type="match status" value="1"/>
</dbReference>
<dbReference type="PIRSF" id="PIRSF003135">
    <property type="entry name" value="Primosomal_n"/>
    <property type="match status" value="1"/>
</dbReference>
<dbReference type="SUPFAM" id="SSF50249">
    <property type="entry name" value="Nucleic acid-binding proteins"/>
    <property type="match status" value="1"/>
</dbReference>
<dbReference type="PROSITE" id="PS50935">
    <property type="entry name" value="SSB"/>
    <property type="match status" value="1"/>
</dbReference>
<evidence type="ECO:0000255" key="1">
    <source>
        <dbReference type="HAMAP-Rule" id="MF_00720"/>
    </source>
</evidence>
<accession>B5R9E9</accession>
<keyword id="KW-0235">DNA replication</keyword>
<keyword id="KW-0238">DNA-binding</keyword>
<keyword id="KW-0639">Primosome</keyword>